<proteinExistence type="evidence at protein level"/>
<keyword id="KW-0002">3D-structure</keyword>
<keyword id="KW-0025">Alternative splicing</keyword>
<keyword id="KW-0106">Calcium</keyword>
<keyword id="KW-0479">Metal-binding</keyword>
<keyword id="KW-0539">Nucleus</keyword>
<keyword id="KW-1267">Proteomics identification</keyword>
<keyword id="KW-1185">Reference proteome</keyword>
<evidence type="ECO:0000255" key="1">
    <source>
        <dbReference type="PROSITE-ProRule" id="PRU00448"/>
    </source>
</evidence>
<evidence type="ECO:0000256" key="2">
    <source>
        <dbReference type="SAM" id="MobiDB-lite"/>
    </source>
</evidence>
<evidence type="ECO:0000269" key="3">
    <source>
    </source>
</evidence>
<evidence type="ECO:0000269" key="4">
    <source>
    </source>
</evidence>
<evidence type="ECO:0000269" key="5">
    <source>
    </source>
</evidence>
<evidence type="ECO:0000303" key="6">
    <source>
    </source>
</evidence>
<evidence type="ECO:0000305" key="7"/>
<evidence type="ECO:0007829" key="8">
    <source>
        <dbReference type="PDB" id="4I5L"/>
    </source>
</evidence>
<evidence type="ECO:0007829" key="9">
    <source>
        <dbReference type="PDB" id="4I5N"/>
    </source>
</evidence>
<evidence type="ECO:0007829" key="10">
    <source>
        <dbReference type="PDB" id="4MEW"/>
    </source>
</evidence>
<organism>
    <name type="scientific">Homo sapiens</name>
    <name type="common">Human</name>
    <dbReference type="NCBI Taxonomy" id="9606"/>
    <lineage>
        <taxon>Eukaryota</taxon>
        <taxon>Metazoa</taxon>
        <taxon>Chordata</taxon>
        <taxon>Craniata</taxon>
        <taxon>Vertebrata</taxon>
        <taxon>Euteleostomi</taxon>
        <taxon>Mammalia</taxon>
        <taxon>Eutheria</taxon>
        <taxon>Euarchontoglires</taxon>
        <taxon>Primates</taxon>
        <taxon>Haplorrhini</taxon>
        <taxon>Catarrhini</taxon>
        <taxon>Hominidae</taxon>
        <taxon>Homo</taxon>
    </lineage>
</organism>
<reference key="1">
    <citation type="journal article" date="2005" name="Nature">
        <title>The DNA sequence of the human X chromosome.</title>
        <authorList>
            <person name="Ross M.T."/>
            <person name="Grafham D.V."/>
            <person name="Coffey A.J."/>
            <person name="Scherer S."/>
            <person name="McLay K."/>
            <person name="Muzny D."/>
            <person name="Platzer M."/>
            <person name="Howell G.R."/>
            <person name="Burrows C."/>
            <person name="Bird C.P."/>
            <person name="Frankish A."/>
            <person name="Lovell F.L."/>
            <person name="Howe K.L."/>
            <person name="Ashurst J.L."/>
            <person name="Fulton R.S."/>
            <person name="Sudbrak R."/>
            <person name="Wen G."/>
            <person name="Jones M.C."/>
            <person name="Hurles M.E."/>
            <person name="Andrews T.D."/>
            <person name="Scott C.E."/>
            <person name="Searle S."/>
            <person name="Ramser J."/>
            <person name="Whittaker A."/>
            <person name="Deadman R."/>
            <person name="Carter N.P."/>
            <person name="Hunt S.E."/>
            <person name="Chen R."/>
            <person name="Cree A."/>
            <person name="Gunaratne P."/>
            <person name="Havlak P."/>
            <person name="Hodgson A."/>
            <person name="Metzker M.L."/>
            <person name="Richards S."/>
            <person name="Scott G."/>
            <person name="Steffen D."/>
            <person name="Sodergren E."/>
            <person name="Wheeler D.A."/>
            <person name="Worley K.C."/>
            <person name="Ainscough R."/>
            <person name="Ambrose K.D."/>
            <person name="Ansari-Lari M.A."/>
            <person name="Aradhya S."/>
            <person name="Ashwell R.I."/>
            <person name="Babbage A.K."/>
            <person name="Bagguley C.L."/>
            <person name="Ballabio A."/>
            <person name="Banerjee R."/>
            <person name="Barker G.E."/>
            <person name="Barlow K.F."/>
            <person name="Barrett I.P."/>
            <person name="Bates K.N."/>
            <person name="Beare D.M."/>
            <person name="Beasley H."/>
            <person name="Beasley O."/>
            <person name="Beck A."/>
            <person name="Bethel G."/>
            <person name="Blechschmidt K."/>
            <person name="Brady N."/>
            <person name="Bray-Allen S."/>
            <person name="Bridgeman A.M."/>
            <person name="Brown A.J."/>
            <person name="Brown M.J."/>
            <person name="Bonnin D."/>
            <person name="Bruford E.A."/>
            <person name="Buhay C."/>
            <person name="Burch P."/>
            <person name="Burford D."/>
            <person name="Burgess J."/>
            <person name="Burrill W."/>
            <person name="Burton J."/>
            <person name="Bye J.M."/>
            <person name="Carder C."/>
            <person name="Carrel L."/>
            <person name="Chako J."/>
            <person name="Chapman J.C."/>
            <person name="Chavez D."/>
            <person name="Chen E."/>
            <person name="Chen G."/>
            <person name="Chen Y."/>
            <person name="Chen Z."/>
            <person name="Chinault C."/>
            <person name="Ciccodicola A."/>
            <person name="Clark S.Y."/>
            <person name="Clarke G."/>
            <person name="Clee C.M."/>
            <person name="Clegg S."/>
            <person name="Clerc-Blankenburg K."/>
            <person name="Clifford K."/>
            <person name="Cobley V."/>
            <person name="Cole C.G."/>
            <person name="Conquer J.S."/>
            <person name="Corby N."/>
            <person name="Connor R.E."/>
            <person name="David R."/>
            <person name="Davies J."/>
            <person name="Davis C."/>
            <person name="Davis J."/>
            <person name="Delgado O."/>
            <person name="Deshazo D."/>
            <person name="Dhami P."/>
            <person name="Ding Y."/>
            <person name="Dinh H."/>
            <person name="Dodsworth S."/>
            <person name="Draper H."/>
            <person name="Dugan-Rocha S."/>
            <person name="Dunham A."/>
            <person name="Dunn M."/>
            <person name="Durbin K.J."/>
            <person name="Dutta I."/>
            <person name="Eades T."/>
            <person name="Ellwood M."/>
            <person name="Emery-Cohen A."/>
            <person name="Errington H."/>
            <person name="Evans K.L."/>
            <person name="Faulkner L."/>
            <person name="Francis F."/>
            <person name="Frankland J."/>
            <person name="Fraser A.E."/>
            <person name="Galgoczy P."/>
            <person name="Gilbert J."/>
            <person name="Gill R."/>
            <person name="Gloeckner G."/>
            <person name="Gregory S.G."/>
            <person name="Gribble S."/>
            <person name="Griffiths C."/>
            <person name="Grocock R."/>
            <person name="Gu Y."/>
            <person name="Gwilliam R."/>
            <person name="Hamilton C."/>
            <person name="Hart E.A."/>
            <person name="Hawes A."/>
            <person name="Heath P.D."/>
            <person name="Heitmann K."/>
            <person name="Hennig S."/>
            <person name="Hernandez J."/>
            <person name="Hinzmann B."/>
            <person name="Ho S."/>
            <person name="Hoffs M."/>
            <person name="Howden P.J."/>
            <person name="Huckle E.J."/>
            <person name="Hume J."/>
            <person name="Hunt P.J."/>
            <person name="Hunt A.R."/>
            <person name="Isherwood J."/>
            <person name="Jacob L."/>
            <person name="Johnson D."/>
            <person name="Jones S."/>
            <person name="de Jong P.J."/>
            <person name="Joseph S.S."/>
            <person name="Keenan S."/>
            <person name="Kelly S."/>
            <person name="Kershaw J.K."/>
            <person name="Khan Z."/>
            <person name="Kioschis P."/>
            <person name="Klages S."/>
            <person name="Knights A.J."/>
            <person name="Kosiura A."/>
            <person name="Kovar-Smith C."/>
            <person name="Laird G.K."/>
            <person name="Langford C."/>
            <person name="Lawlor S."/>
            <person name="Leversha M."/>
            <person name="Lewis L."/>
            <person name="Liu W."/>
            <person name="Lloyd C."/>
            <person name="Lloyd D.M."/>
            <person name="Loulseged H."/>
            <person name="Loveland J.E."/>
            <person name="Lovell J.D."/>
            <person name="Lozado R."/>
            <person name="Lu J."/>
            <person name="Lyne R."/>
            <person name="Ma J."/>
            <person name="Maheshwari M."/>
            <person name="Matthews L.H."/>
            <person name="McDowall J."/>
            <person name="McLaren S."/>
            <person name="McMurray A."/>
            <person name="Meidl P."/>
            <person name="Meitinger T."/>
            <person name="Milne S."/>
            <person name="Miner G."/>
            <person name="Mistry S.L."/>
            <person name="Morgan M."/>
            <person name="Morris S."/>
            <person name="Mueller I."/>
            <person name="Mullikin J.C."/>
            <person name="Nguyen N."/>
            <person name="Nordsiek G."/>
            <person name="Nyakatura G."/>
            <person name="O'dell C.N."/>
            <person name="Okwuonu G."/>
            <person name="Palmer S."/>
            <person name="Pandian R."/>
            <person name="Parker D."/>
            <person name="Parrish J."/>
            <person name="Pasternak S."/>
            <person name="Patel D."/>
            <person name="Pearce A.V."/>
            <person name="Pearson D.M."/>
            <person name="Pelan S.E."/>
            <person name="Perez L."/>
            <person name="Porter K.M."/>
            <person name="Ramsey Y."/>
            <person name="Reichwald K."/>
            <person name="Rhodes S."/>
            <person name="Ridler K.A."/>
            <person name="Schlessinger D."/>
            <person name="Schueler M.G."/>
            <person name="Sehra H.K."/>
            <person name="Shaw-Smith C."/>
            <person name="Shen H."/>
            <person name="Sheridan E.M."/>
            <person name="Shownkeen R."/>
            <person name="Skuce C.D."/>
            <person name="Smith M.L."/>
            <person name="Sotheran E.C."/>
            <person name="Steingruber H.E."/>
            <person name="Steward C.A."/>
            <person name="Storey R."/>
            <person name="Swann R.M."/>
            <person name="Swarbreck D."/>
            <person name="Tabor P.E."/>
            <person name="Taudien S."/>
            <person name="Taylor T."/>
            <person name="Teague B."/>
            <person name="Thomas K."/>
            <person name="Thorpe A."/>
            <person name="Timms K."/>
            <person name="Tracey A."/>
            <person name="Trevanion S."/>
            <person name="Tromans A.C."/>
            <person name="d'Urso M."/>
            <person name="Verduzco D."/>
            <person name="Villasana D."/>
            <person name="Waldron L."/>
            <person name="Wall M."/>
            <person name="Wang Q."/>
            <person name="Warren J."/>
            <person name="Warry G.L."/>
            <person name="Wei X."/>
            <person name="West A."/>
            <person name="Whitehead S.L."/>
            <person name="Whiteley M.N."/>
            <person name="Wilkinson J.E."/>
            <person name="Willey D.L."/>
            <person name="Williams G."/>
            <person name="Williams L."/>
            <person name="Williamson A."/>
            <person name="Williamson H."/>
            <person name="Wilming L."/>
            <person name="Woodmansey R.L."/>
            <person name="Wray P.W."/>
            <person name="Yen J."/>
            <person name="Zhang J."/>
            <person name="Zhou J."/>
            <person name="Zoghbi H."/>
            <person name="Zorilla S."/>
            <person name="Buck D."/>
            <person name="Reinhardt R."/>
            <person name="Poustka A."/>
            <person name="Rosenthal A."/>
            <person name="Lehrach H."/>
            <person name="Meindl A."/>
            <person name="Minx P.J."/>
            <person name="Hillier L.W."/>
            <person name="Willard H.F."/>
            <person name="Wilson R.K."/>
            <person name="Waterston R.H."/>
            <person name="Rice C.M."/>
            <person name="Vaudin M."/>
            <person name="Coulson A."/>
            <person name="Nelson D.L."/>
            <person name="Weinstock G."/>
            <person name="Sulston J.E."/>
            <person name="Durbin R.M."/>
            <person name="Hubbard T."/>
            <person name="Gibbs R.A."/>
            <person name="Beck S."/>
            <person name="Rogers J."/>
            <person name="Bentley D.R."/>
        </authorList>
    </citation>
    <scope>NUCLEOTIDE SEQUENCE [LARGE SCALE GENOMIC DNA]</scope>
</reference>
<reference key="2">
    <citation type="journal article" date="2004" name="Genome Res.">
        <title>The status, quality, and expansion of the NIH full-length cDNA project: the Mammalian Gene Collection (MGC).</title>
        <authorList>
            <consortium name="The MGC Project Team"/>
        </authorList>
    </citation>
    <scope>NUCLEOTIDE SEQUENCE [LARGE SCALE MRNA] (ISOFORMS 1 AND 2)</scope>
    <scope>VARIANT VAL-519</scope>
    <source>
        <tissue>Brain</tissue>
    </source>
</reference>
<reference key="3">
    <citation type="journal article" date="2000" name="Mol. Cell. Biol.">
        <title>PR48, a novel regulatory subunit of protein phosphatase 2A, interacts with cdc6 and modulates DNA replication in human cells.</title>
        <authorList>
            <person name="Yan Z."/>
            <person name="Fedorov S.A."/>
            <person name="Mumby M.C."/>
            <person name="Williams R.S."/>
        </authorList>
    </citation>
    <scope>NUCLEOTIDE SEQUENCE [MRNA] OF 125-475</scope>
    <scope>SUBCELLULAR LOCATION</scope>
    <scope>INTERACTION WITH CDC6</scope>
    <source>
        <tissue>Placenta</tissue>
    </source>
</reference>
<reference key="4">
    <citation type="journal article" date="2003" name="Eur. J. Biochem.">
        <title>Identification and characterization of B''-subunits of protein phosphatase 2 A in Xenopus laevis oocytes and adult tissues.</title>
        <authorList>
            <person name="Stevens I."/>
            <person name="Janssens V."/>
            <person name="Martens E."/>
            <person name="Dilworth S."/>
            <person name="Goris J."/>
            <person name="Van Hoof C."/>
        </authorList>
    </citation>
    <scope>IDENTIFICATION OF MISSING N-TERMINAL SEQUENCE</scope>
</reference>
<reference key="5">
    <citation type="journal article" date="2008" name="Mol. Cell">
        <title>Kinase-selective enrichment enables quantitative phosphoproteomics of the kinome across the cell cycle.</title>
        <authorList>
            <person name="Daub H."/>
            <person name="Olsen J.V."/>
            <person name="Bairlein M."/>
            <person name="Gnad F."/>
            <person name="Oppermann F.S."/>
            <person name="Korner R."/>
            <person name="Greff Z."/>
            <person name="Keri G."/>
            <person name="Stemmann O."/>
            <person name="Mann M."/>
        </authorList>
    </citation>
    <scope>IDENTIFICATION BY MASS SPECTROMETRY [LARGE SCALE ANALYSIS]</scope>
    <source>
        <tissue>Cervix carcinoma</tissue>
    </source>
</reference>
<reference key="6">
    <citation type="journal article" date="2016" name="PLoS ONE">
        <title>Characterization and Genetic Analyses of New Genes Coding for NOD2 Interacting Proteins.</title>
        <authorList>
            <person name="Thiebaut R."/>
            <person name="Esmiol S."/>
            <person name="Lecine P."/>
            <person name="Mahfouz B."/>
            <person name="Hermant A."/>
            <person name="Nicoletti C."/>
            <person name="Parnis S."/>
            <person name="Perroy J."/>
            <person name="Borg J.P."/>
            <person name="Pascoe L."/>
            <person name="Hugot J.P."/>
            <person name="Ollendorff V."/>
        </authorList>
    </citation>
    <scope>INTERACTION WITH NOD2</scope>
</reference>
<comment type="function">
    <text>The B regulatory subunit might modulate substrate selectivity and catalytic activity, and might also direct the localization of the catalytic enzyme to a particular subcellular compartment.</text>
</comment>
<comment type="subunit">
    <text evidence="3 5">PP2A consists of a common heterodimeric core enzyme, composed of a 36 kDa catalytic subunit (subunit C) and a 65 kDa constant regulatory subunit (PR65 or subunit A), that associates with a variety of regulatory subunits. Proteins that associate with the core dimer include three families of regulatory subunits B (the R2/B/PR55/B55, R3/B''/PR72/PR130/PR59 and R5/B'/B56 families), the 48 kDa variable regulatory subunit, viral proteins, and cell signaling molecules. Interacts with N-terminal region of CDC6. Interacts with NOD2 (PubMed:27812135).</text>
</comment>
<comment type="interaction">
    <interactant intactId="EBI-2479826">
        <id>Q9Y5P8</id>
    </interactant>
    <interactant intactId="EBI-715161">
        <id>Q9UNI6</id>
        <label>DUSP12</label>
    </interactant>
    <organismsDiffer>false</organismsDiffer>
    <experiments>4</experiments>
</comment>
<comment type="interaction">
    <interactant intactId="EBI-2479826">
        <id>Q9Y5P8</id>
    </interactant>
    <interactant intactId="EBI-740220">
        <id>O14964</id>
        <label>HGS</label>
    </interactant>
    <organismsDiffer>false</organismsDiffer>
    <experiments>3</experiments>
</comment>
<comment type="interaction">
    <interactant intactId="EBI-2479826">
        <id>Q9Y5P8</id>
    </interactant>
    <interactant intactId="EBI-747693">
        <id>P41227</id>
        <label>NAA10</label>
    </interactant>
    <organismsDiffer>false</organismsDiffer>
    <experiments>3</experiments>
</comment>
<comment type="interaction">
    <interactant intactId="EBI-2479826">
        <id>Q9Y5P8</id>
    </interactant>
    <interactant intactId="EBI-7445625">
        <id>Q9HC29</id>
        <label>NOD2</label>
    </interactant>
    <organismsDiffer>false</organismsDiffer>
    <experiments>5</experiments>
</comment>
<comment type="subcellular location">
    <subcellularLocation>
        <location evidence="3">Nucleus</location>
    </subcellularLocation>
</comment>
<comment type="alternative products">
    <event type="alternative splicing"/>
    <isoform>
        <id>Q9Y5P8-1</id>
        <name>1</name>
        <sequence type="displayed"/>
    </isoform>
    <isoform>
        <id>Q9Y5P8-2</id>
        <name>2</name>
        <sequence type="described" ref="VSP_037310"/>
    </isoform>
</comment>
<comment type="miscellaneous">
    <text>The gene coding for this protein is located in the pseudoautosomal region 1 (PAR1) of X and Y chromosomes.</text>
</comment>
<comment type="sequence caution" evidence="7">
    <conflict type="erroneous initiation">
        <sequence resource="EMBL-CDS" id="AAD38515"/>
    </conflict>
</comment>
<feature type="chain" id="PRO_0000071444" description="Serine/threonine-protein phosphatase 2A regulatory subunit B'' subunit beta">
    <location>
        <begin position="1"/>
        <end position="575"/>
    </location>
</feature>
<feature type="domain" description="EF-hand" evidence="1">
    <location>
        <begin position="388"/>
        <end position="423"/>
    </location>
</feature>
<feature type="region of interest" description="Disordered" evidence="2">
    <location>
        <begin position="41"/>
        <end position="131"/>
    </location>
</feature>
<feature type="binding site" evidence="1">
    <location>
        <position position="401"/>
    </location>
    <ligand>
        <name>Ca(2+)</name>
        <dbReference type="ChEBI" id="CHEBI:29108"/>
    </ligand>
</feature>
<feature type="binding site" evidence="1">
    <location>
        <position position="403"/>
    </location>
    <ligand>
        <name>Ca(2+)</name>
        <dbReference type="ChEBI" id="CHEBI:29108"/>
    </ligand>
</feature>
<feature type="binding site" evidence="1">
    <location>
        <position position="405"/>
    </location>
    <ligand>
        <name>Ca(2+)</name>
        <dbReference type="ChEBI" id="CHEBI:29108"/>
    </ligand>
</feature>
<feature type="binding site" evidence="1">
    <location>
        <position position="412"/>
    </location>
    <ligand>
        <name>Ca(2+)</name>
        <dbReference type="ChEBI" id="CHEBI:29108"/>
    </ligand>
</feature>
<feature type="splice variant" id="VSP_037310" description="In isoform 2." evidence="6">
    <location>
        <begin position="1"/>
        <end position="399"/>
    </location>
</feature>
<feature type="sequence variant" id="VAR_035109" description="In dbSNP:rs3813594.">
    <original>D</original>
    <variation>E</variation>
    <location>
        <position position="163"/>
    </location>
</feature>
<feature type="sequence variant" id="VAR_055356" description="In dbSNP:rs1133520." evidence="4">
    <original>A</original>
    <variation>V</variation>
    <location>
        <position position="519"/>
    </location>
</feature>
<feature type="turn" evidence="8">
    <location>
        <begin position="122"/>
        <end position="124"/>
    </location>
</feature>
<feature type="helix" evidence="10">
    <location>
        <begin position="141"/>
        <end position="152"/>
    </location>
</feature>
<feature type="helix" evidence="10">
    <location>
        <begin position="156"/>
        <end position="158"/>
    </location>
</feature>
<feature type="strand" evidence="9">
    <location>
        <begin position="159"/>
        <end position="161"/>
    </location>
</feature>
<feature type="helix" evidence="10">
    <location>
        <begin position="162"/>
        <end position="164"/>
    </location>
</feature>
<feature type="helix" evidence="10">
    <location>
        <begin position="165"/>
        <end position="171"/>
    </location>
</feature>
<feature type="helix" evidence="10">
    <location>
        <begin position="176"/>
        <end position="178"/>
    </location>
</feature>
<feature type="helix" evidence="10">
    <location>
        <begin position="179"/>
        <end position="185"/>
    </location>
</feature>
<feature type="helix" evidence="10">
    <location>
        <begin position="188"/>
        <end position="191"/>
    </location>
</feature>
<feature type="strand" evidence="10">
    <location>
        <begin position="192"/>
        <end position="195"/>
    </location>
</feature>
<feature type="helix" evidence="10">
    <location>
        <begin position="196"/>
        <end position="209"/>
    </location>
</feature>
<feature type="helix" evidence="10">
    <location>
        <begin position="213"/>
        <end position="221"/>
    </location>
</feature>
<feature type="turn" evidence="9">
    <location>
        <begin position="224"/>
        <end position="226"/>
    </location>
</feature>
<feature type="strand" evidence="10">
    <location>
        <begin position="227"/>
        <end position="229"/>
    </location>
</feature>
<feature type="helix" evidence="10">
    <location>
        <begin position="231"/>
        <end position="234"/>
    </location>
</feature>
<feature type="helix" evidence="10">
    <location>
        <begin position="235"/>
        <end position="244"/>
    </location>
</feature>
<feature type="helix" evidence="10">
    <location>
        <begin position="246"/>
        <end position="248"/>
    </location>
</feature>
<feature type="helix" evidence="10">
    <location>
        <begin position="249"/>
        <end position="252"/>
    </location>
</feature>
<feature type="helix" evidence="10">
    <location>
        <begin position="255"/>
        <end position="257"/>
    </location>
</feature>
<feature type="helix" evidence="10">
    <location>
        <begin position="258"/>
        <end position="273"/>
    </location>
</feature>
<feature type="helix" evidence="10">
    <location>
        <begin position="283"/>
        <end position="287"/>
    </location>
</feature>
<feature type="helix" evidence="10">
    <location>
        <begin position="291"/>
        <end position="297"/>
    </location>
</feature>
<feature type="turn" evidence="10">
    <location>
        <begin position="298"/>
        <end position="300"/>
    </location>
</feature>
<feature type="helix" evidence="10">
    <location>
        <begin position="304"/>
        <end position="306"/>
    </location>
</feature>
<feature type="turn" evidence="10">
    <location>
        <begin position="308"/>
        <end position="311"/>
    </location>
</feature>
<feature type="helix" evidence="10">
    <location>
        <begin position="313"/>
        <end position="326"/>
    </location>
</feature>
<feature type="strand" evidence="10">
    <location>
        <begin position="331"/>
        <end position="334"/>
    </location>
</feature>
<feature type="helix" evidence="10">
    <location>
        <begin position="336"/>
        <end position="341"/>
    </location>
</feature>
<feature type="turn" evidence="10">
    <location>
        <begin position="342"/>
        <end position="344"/>
    </location>
</feature>
<feature type="helix" evidence="10">
    <location>
        <begin position="349"/>
        <end position="355"/>
    </location>
</feature>
<feature type="turn" evidence="10">
    <location>
        <begin position="356"/>
        <end position="358"/>
    </location>
</feature>
<feature type="strand" evidence="8">
    <location>
        <begin position="359"/>
        <end position="364"/>
    </location>
</feature>
<feature type="helix" evidence="8">
    <location>
        <begin position="365"/>
        <end position="369"/>
    </location>
</feature>
<feature type="strand" evidence="8">
    <location>
        <begin position="371"/>
        <end position="373"/>
    </location>
</feature>
<feature type="helix" evidence="10">
    <location>
        <begin position="374"/>
        <end position="385"/>
    </location>
</feature>
<feature type="helix" evidence="10">
    <location>
        <begin position="390"/>
        <end position="400"/>
    </location>
</feature>
<feature type="strand" evidence="10">
    <location>
        <begin position="405"/>
        <end position="409"/>
    </location>
</feature>
<feature type="helix" evidence="10">
    <location>
        <begin position="410"/>
        <end position="425"/>
    </location>
</feature>
<feature type="turn" evidence="10">
    <location>
        <begin position="426"/>
        <end position="428"/>
    </location>
</feature>
<feature type="helix" evidence="10">
    <location>
        <begin position="434"/>
        <end position="445"/>
    </location>
</feature>
<feature type="strand" evidence="9">
    <location>
        <begin position="448"/>
        <end position="451"/>
    </location>
</feature>
<feature type="strand" evidence="10">
    <location>
        <begin position="452"/>
        <end position="454"/>
    </location>
</feature>
<feature type="helix" evidence="10">
    <location>
        <begin position="455"/>
        <end position="461"/>
    </location>
</feature>
<feature type="helix" evidence="10">
    <location>
        <begin position="464"/>
        <end position="472"/>
    </location>
</feature>
<feature type="helix" evidence="10">
    <location>
        <begin position="477"/>
        <end position="479"/>
    </location>
</feature>
<name>P2R3B_HUMAN</name>
<accession>Q9Y5P8</accession>
<accession>Q6P4G9</accession>
<accession>Q7RTT1</accession>
<accession>Q96H01</accession>
<gene>
    <name type="primary">PPP2R3B</name>
    <name type="synonym">PPP2R3L</name>
</gene>
<protein>
    <recommendedName>
        <fullName>Serine/threonine-protein phosphatase 2A regulatory subunit B'' subunit beta</fullName>
    </recommendedName>
    <alternativeName>
        <fullName>PP2A subunit B isoform PR48</fullName>
    </alternativeName>
    <alternativeName>
        <fullName>Protein phosphatase 2A 48 kDa regulatory subunit</fullName>
    </alternativeName>
</protein>
<dbReference type="EMBL" id="AL954664">
    <property type="status" value="NOT_ANNOTATED_CDS"/>
    <property type="molecule type" value="Genomic_DNA"/>
</dbReference>
<dbReference type="EMBL" id="BX000476">
    <property type="status" value="NOT_ANNOTATED_CDS"/>
    <property type="molecule type" value="Genomic_DNA"/>
</dbReference>
<dbReference type="EMBL" id="BC009032">
    <property type="protein sequence ID" value="AAH09032.1"/>
    <property type="molecule type" value="mRNA"/>
</dbReference>
<dbReference type="EMBL" id="BC063429">
    <property type="protein sequence ID" value="AAH63429.1"/>
    <property type="molecule type" value="mRNA"/>
</dbReference>
<dbReference type="EMBL" id="AF135016">
    <property type="protein sequence ID" value="AAD38515.1"/>
    <property type="status" value="ALT_INIT"/>
    <property type="molecule type" value="mRNA"/>
</dbReference>
<dbReference type="EMBL" id="BK000521">
    <property type="protein sequence ID" value="DAA00385.1"/>
    <property type="molecule type" value="mRNA"/>
</dbReference>
<dbReference type="CCDS" id="CCDS14104.1">
    <molecule id="Q9Y5P8-1"/>
</dbReference>
<dbReference type="RefSeq" id="NP_037371.2">
    <molecule id="Q9Y5P8-1"/>
    <property type="nucleotide sequence ID" value="NM_013239.4"/>
</dbReference>
<dbReference type="PDB" id="4I5L">
    <property type="method" value="X-ray"/>
    <property type="resolution" value="2.43 A"/>
    <property type="chains" value="B/E=122-490"/>
</dbReference>
<dbReference type="PDB" id="4I5N">
    <property type="method" value="X-ray"/>
    <property type="resolution" value="2.80 A"/>
    <property type="chains" value="B/E=122-490"/>
</dbReference>
<dbReference type="PDB" id="4MEW">
    <property type="method" value="X-ray"/>
    <property type="resolution" value="1.99 A"/>
    <property type="chains" value="A=130-483"/>
</dbReference>
<dbReference type="PDBsum" id="4I5L"/>
<dbReference type="PDBsum" id="4I5N"/>
<dbReference type="PDBsum" id="4MEW"/>
<dbReference type="SMR" id="Q9Y5P8"/>
<dbReference type="BioGRID" id="118179">
    <property type="interactions" value="33"/>
</dbReference>
<dbReference type="CORUM" id="Q9Y5P8"/>
<dbReference type="FunCoup" id="Q9Y5P8">
    <property type="interactions" value="2288"/>
</dbReference>
<dbReference type="IntAct" id="Q9Y5P8">
    <property type="interactions" value="30"/>
</dbReference>
<dbReference type="MINT" id="Q9Y5P8"/>
<dbReference type="STRING" id="9606.ENSP00000375080"/>
<dbReference type="GlyGen" id="Q9Y5P8">
    <property type="glycosylation" value="4 sites"/>
</dbReference>
<dbReference type="iPTMnet" id="Q9Y5P8"/>
<dbReference type="PhosphoSitePlus" id="Q9Y5P8"/>
<dbReference type="BioMuta" id="PPP2R3B"/>
<dbReference type="DMDM" id="158523346"/>
<dbReference type="jPOST" id="Q9Y5P8"/>
<dbReference type="MassIVE" id="Q9Y5P8"/>
<dbReference type="PaxDb" id="9606-ENSP00000375080"/>
<dbReference type="PeptideAtlas" id="Q9Y5P8"/>
<dbReference type="ProteomicsDB" id="86468">
    <molecule id="Q9Y5P8-1"/>
</dbReference>
<dbReference type="ProteomicsDB" id="86469">
    <molecule id="Q9Y5P8-2"/>
</dbReference>
<dbReference type="Pumba" id="Q9Y5P8"/>
<dbReference type="Antibodypedia" id="23305">
    <property type="antibodies" value="226 antibodies from 30 providers"/>
</dbReference>
<dbReference type="DNASU" id="28227"/>
<dbReference type="Ensembl" id="ENST00000390665.9">
    <molecule id="Q9Y5P8-1"/>
    <property type="protein sequence ID" value="ENSP00000375080.3"/>
    <property type="gene ID" value="ENSG00000167393.18"/>
</dbReference>
<dbReference type="Ensembl" id="ENST00000711115.1">
    <molecule id="Q9Y5P8-1"/>
    <property type="protein sequence ID" value="ENSP00000518592.1"/>
    <property type="gene ID" value="ENSG00000292327.1"/>
</dbReference>
<dbReference type="GeneID" id="28227"/>
<dbReference type="KEGG" id="hsa:28227"/>
<dbReference type="MANE-Select" id="ENST00000390665.9">
    <property type="protein sequence ID" value="ENSP00000375080.3"/>
    <property type="RefSeq nucleotide sequence ID" value="NM_013239.5"/>
    <property type="RefSeq protein sequence ID" value="NP_037371.2"/>
</dbReference>
<dbReference type="UCSC" id="uc004cpg.4">
    <molecule id="Q9Y5P8-1"/>
    <property type="organism name" value="human"/>
</dbReference>
<dbReference type="AGR" id="HGNC:13417"/>
<dbReference type="CTD" id="28227"/>
<dbReference type="DisGeNET" id="28227"/>
<dbReference type="GeneCards" id="PPP2R3B"/>
<dbReference type="HGNC" id="HGNC:13417">
    <property type="gene designation" value="PPP2R3B"/>
</dbReference>
<dbReference type="HPA" id="ENSG00000167393">
    <property type="expression patterns" value="Group enriched (heart muscle, skeletal muscle)"/>
</dbReference>
<dbReference type="MIM" id="300339">
    <property type="type" value="gene"/>
</dbReference>
<dbReference type="neXtProt" id="NX_Q9Y5P8"/>
<dbReference type="OpenTargets" id="ENSG00000167393"/>
<dbReference type="PharmGKB" id="PA134878872"/>
<dbReference type="VEuPathDB" id="HostDB:ENSG00000167393"/>
<dbReference type="eggNOG" id="KOG2562">
    <property type="taxonomic scope" value="Eukaryota"/>
</dbReference>
<dbReference type="GeneTree" id="ENSGT00940000154659"/>
<dbReference type="HOGENOM" id="CLU_019589_2_0_1"/>
<dbReference type="InParanoid" id="Q9Y5P8"/>
<dbReference type="OMA" id="GPENECY"/>
<dbReference type="OrthoDB" id="5586at2759"/>
<dbReference type="PAN-GO" id="Q9Y5P8">
    <property type="GO annotations" value="3 GO annotations based on evolutionary models"/>
</dbReference>
<dbReference type="PhylomeDB" id="Q9Y5P8"/>
<dbReference type="TreeFam" id="TF105554"/>
<dbReference type="PathwayCommons" id="Q9Y5P8"/>
<dbReference type="Reactome" id="R-HSA-113501">
    <property type="pathway name" value="Inhibition of replication initiation of damaged DNA by RB1/E2F1"/>
</dbReference>
<dbReference type="Reactome" id="R-HSA-69231">
    <property type="pathway name" value="Cyclin D associated events in G1"/>
</dbReference>
<dbReference type="Reactome" id="R-HSA-69273">
    <property type="pathway name" value="Cyclin A/B1/B2 associated events during G2/M transition"/>
</dbReference>
<dbReference type="SignaLink" id="Q9Y5P8"/>
<dbReference type="BioGRID-ORCS" id="28227">
    <property type="hits" value="14 hits in 619 CRISPR screens"/>
</dbReference>
<dbReference type="ChiTaRS" id="PPP2R3B">
    <property type="organism name" value="human"/>
</dbReference>
<dbReference type="EvolutionaryTrace" id="Q9Y5P8"/>
<dbReference type="GeneWiki" id="PPP2R3B"/>
<dbReference type="GenomeRNAi" id="28227"/>
<dbReference type="Pharos" id="Q9Y5P8">
    <property type="development level" value="Tbio"/>
</dbReference>
<dbReference type="PRO" id="PR:Q9Y5P8"/>
<dbReference type="Proteomes" id="UP000005640">
    <property type="component" value="Chromosome X"/>
</dbReference>
<dbReference type="Proteomes" id="UP000005640">
    <property type="component" value="Chromosome Y"/>
</dbReference>
<dbReference type="RNAct" id="Q9Y5P8">
    <property type="molecule type" value="protein"/>
</dbReference>
<dbReference type="Bgee" id="ENSG00000167393">
    <property type="expression patterns" value="Expressed in apex of heart and 97 other cell types or tissues"/>
</dbReference>
<dbReference type="ExpressionAtlas" id="Q9Y5P8">
    <property type="expression patterns" value="baseline and differential"/>
</dbReference>
<dbReference type="GO" id="GO:0005929">
    <property type="term" value="C:cilium"/>
    <property type="evidence" value="ECO:0000314"/>
    <property type="project" value="HPA"/>
</dbReference>
<dbReference type="GO" id="GO:0005829">
    <property type="term" value="C:cytosol"/>
    <property type="evidence" value="ECO:0000314"/>
    <property type="project" value="HPA"/>
</dbReference>
<dbReference type="GO" id="GO:0005654">
    <property type="term" value="C:nucleoplasm"/>
    <property type="evidence" value="ECO:0000314"/>
    <property type="project" value="HPA"/>
</dbReference>
<dbReference type="GO" id="GO:0005634">
    <property type="term" value="C:nucleus"/>
    <property type="evidence" value="ECO:0000304"/>
    <property type="project" value="ProtInc"/>
</dbReference>
<dbReference type="GO" id="GO:0000159">
    <property type="term" value="C:protein phosphatase type 2A complex"/>
    <property type="evidence" value="ECO:0000250"/>
    <property type="project" value="UniProtKB"/>
</dbReference>
<dbReference type="GO" id="GO:0005509">
    <property type="term" value="F:calcium ion binding"/>
    <property type="evidence" value="ECO:0007669"/>
    <property type="project" value="InterPro"/>
</dbReference>
<dbReference type="GO" id="GO:0019888">
    <property type="term" value="F:protein phosphatase regulator activity"/>
    <property type="evidence" value="ECO:0000250"/>
    <property type="project" value="UniProtKB"/>
</dbReference>
<dbReference type="GO" id="GO:0006470">
    <property type="term" value="P:protein dephosphorylation"/>
    <property type="evidence" value="ECO:0000250"/>
    <property type="project" value="UniProtKB"/>
</dbReference>
<dbReference type="GO" id="GO:0051726">
    <property type="term" value="P:regulation of cell cycle"/>
    <property type="evidence" value="ECO:0000304"/>
    <property type="project" value="ProtInc"/>
</dbReference>
<dbReference type="CDD" id="cd21507">
    <property type="entry name" value="PPP2R3B"/>
    <property type="match status" value="1"/>
</dbReference>
<dbReference type="FunFam" id="1.10.238.220:FF:000001">
    <property type="entry name" value="Serine/threonine-protein phosphatase 2A regulatory subunit B'' subunit alpha"/>
    <property type="match status" value="1"/>
</dbReference>
<dbReference type="FunFam" id="1.10.238.10:FF:000628">
    <property type="entry name" value="Serine/threonine-protein phosphatase 2A regulatory subunit B'' subunit beta"/>
    <property type="match status" value="1"/>
</dbReference>
<dbReference type="FunFam" id="1.10.238.230:FF:000001">
    <property type="entry name" value="Serine/threonine-protein phosphatase 2A regulatory subunit B'' subunit beta"/>
    <property type="match status" value="1"/>
</dbReference>
<dbReference type="Gene3D" id="1.10.238.220">
    <property type="match status" value="1"/>
</dbReference>
<dbReference type="Gene3D" id="1.10.238.230">
    <property type="match status" value="1"/>
</dbReference>
<dbReference type="Gene3D" id="1.10.238.10">
    <property type="entry name" value="EF-hand"/>
    <property type="match status" value="1"/>
</dbReference>
<dbReference type="InterPro" id="IPR011992">
    <property type="entry name" value="EF-hand-dom_pair"/>
</dbReference>
<dbReference type="InterPro" id="IPR041534">
    <property type="entry name" value="EF-hand_13"/>
</dbReference>
<dbReference type="InterPro" id="IPR018247">
    <property type="entry name" value="EF_Hand_1_Ca_BS"/>
</dbReference>
<dbReference type="InterPro" id="IPR002048">
    <property type="entry name" value="EF_hand_dom"/>
</dbReference>
<dbReference type="InterPro" id="IPR048855">
    <property type="entry name" value="P2R3A_B_D_EF-hand"/>
</dbReference>
<dbReference type="PANTHER" id="PTHR14095">
    <property type="entry name" value="PHOSPHATASE 2A REGULATORY SUBUNIT-RELATED"/>
    <property type="match status" value="1"/>
</dbReference>
<dbReference type="PANTHER" id="PTHR14095:SF1">
    <property type="entry name" value="SERINE_THREONINE-PROTEIN PHOSPHATASE 2A REGULATORY SUBUNIT B'' SUBUNIT BETA"/>
    <property type="match status" value="1"/>
</dbReference>
<dbReference type="Pfam" id="PF17958">
    <property type="entry name" value="EF-hand_13"/>
    <property type="match status" value="1"/>
</dbReference>
<dbReference type="Pfam" id="PF13499">
    <property type="entry name" value="EF-hand_7"/>
    <property type="match status" value="1"/>
</dbReference>
<dbReference type="Pfam" id="PF21161">
    <property type="entry name" value="P2R3B_EF-hand"/>
    <property type="match status" value="1"/>
</dbReference>
<dbReference type="SUPFAM" id="SSF47473">
    <property type="entry name" value="EF-hand"/>
    <property type="match status" value="2"/>
</dbReference>
<dbReference type="PROSITE" id="PS00018">
    <property type="entry name" value="EF_HAND_1"/>
    <property type="match status" value="1"/>
</dbReference>
<dbReference type="PROSITE" id="PS50222">
    <property type="entry name" value="EF_HAND_2"/>
    <property type="match status" value="1"/>
</dbReference>
<sequence>MPPGKVLQPVLKMKVDELFLYWLSEASTQRMLQDCLRRIKAPGRDQPTPGDGEQPGAWPTAPLAAPRPSGLEPPGTPGPGPALPLGAASSPRNAPHVRGTRRSAGTRVVQTRKEEPLPPATSQSIPTFYFPRGRPQDSVNVDAVISKIESTFARFPHERATMDDMGLVAKACGCPLYWKGPLFYGAGGERTGSVSVHKFVAMWRKILQNCHDDAAKFVHLLMSPGCNYLVQEDFVPFLQDVVNTHPGLSFLKEASEFHSRYITTVIQRIFYAVNRSWSGRITCAELRRSSFLQNVALLEEEADINQLTEFFSYEHFYVIYCKFWELDTDHDLLIDADDLARHNDHALSTKMIDRIFSGAVTRGRKVQKEGKISYADFVWFLISEEDKKTPTSIEYWFRCMDLDGDGALSMFELEYFYEEQCRRLDSMAIEALPFQDCLCQMLDLVKPRTEGKITLQDLKRCKLANVFFDTFFNIEKYLDHEQKEQISLLRDGDSGGPELSDWEKYAAEEYDILVAEETAGEPWEDGFEAELSPVEQKLSALRSPLAQRPFFEAPSPLGAVDLYEYACGDEDLEPL</sequence>